<comment type="function">
    <text evidence="1">Forms part of the ribosomal stalk, playing a central role in the interaction of the ribosome with GTP-bound translation factors.</text>
</comment>
<comment type="subunit">
    <text evidence="1">Part of the ribosomal stalk of the 50S ribosomal subunit. The N-terminus interacts with L11 and the large rRNA to form the base of the stalk. The C-terminus forms an elongated spine to which L12 dimers bind in a sequential fashion forming a multimeric L10(L12)X complex.</text>
</comment>
<comment type="similarity">
    <text evidence="1">Belongs to the universal ribosomal protein uL10 family.</text>
</comment>
<gene>
    <name evidence="1" type="primary">rplJ</name>
    <name type="ordered locus">BUAP5A_035</name>
</gene>
<keyword id="KW-0687">Ribonucleoprotein</keyword>
<keyword id="KW-0689">Ribosomal protein</keyword>
<keyword id="KW-0694">RNA-binding</keyword>
<keyword id="KW-0699">rRNA-binding</keyword>
<feature type="chain" id="PRO_1000195532" description="Large ribosomal subunit protein uL10">
    <location>
        <begin position="1"/>
        <end position="165"/>
    </location>
</feature>
<sequence length="165" mass="18246">MALSIHDKKIIVSKINKISNTALSAVTADLQGVCVNKINELRKSGREVGVKMSIVQNTLLSLAIKNTVFECLKKKLKGSTFIAYSMIHPGSGARLFKEFSKKNTQFKITGAAFEGKLLSILEINQLADMPTYKEAIIKLLLTWKMLIAGKLIYTLSAIKQKKETS</sequence>
<proteinExistence type="inferred from homology"/>
<reference key="1">
    <citation type="journal article" date="2009" name="Science">
        <title>The dynamics and time scale of ongoing genomic erosion in symbiotic bacteria.</title>
        <authorList>
            <person name="Moran N.A."/>
            <person name="McLaughlin H.J."/>
            <person name="Sorek R."/>
        </authorList>
    </citation>
    <scope>NUCLEOTIDE SEQUENCE [LARGE SCALE GENOMIC DNA]</scope>
    <source>
        <strain>5A</strain>
    </source>
</reference>
<protein>
    <recommendedName>
        <fullName evidence="1">Large ribosomal subunit protein uL10</fullName>
    </recommendedName>
    <alternativeName>
        <fullName evidence="2">50S ribosomal protein L10</fullName>
    </alternativeName>
</protein>
<evidence type="ECO:0000255" key="1">
    <source>
        <dbReference type="HAMAP-Rule" id="MF_00362"/>
    </source>
</evidence>
<evidence type="ECO:0000305" key="2"/>
<organism>
    <name type="scientific">Buchnera aphidicola subsp. Acyrthosiphon pisum (strain 5A)</name>
    <dbReference type="NCBI Taxonomy" id="563178"/>
    <lineage>
        <taxon>Bacteria</taxon>
        <taxon>Pseudomonadati</taxon>
        <taxon>Pseudomonadota</taxon>
        <taxon>Gammaproteobacteria</taxon>
        <taxon>Enterobacterales</taxon>
        <taxon>Erwiniaceae</taxon>
        <taxon>Buchnera</taxon>
    </lineage>
</organism>
<name>RL10_BUCA5</name>
<accession>B8D8J8</accession>
<dbReference type="EMBL" id="CP001161">
    <property type="protein sequence ID" value="ACL30420.1"/>
    <property type="molecule type" value="Genomic_DNA"/>
</dbReference>
<dbReference type="RefSeq" id="WP_009873997.1">
    <property type="nucleotide sequence ID" value="NC_011833.1"/>
</dbReference>
<dbReference type="KEGG" id="bap:BUAP5A_035"/>
<dbReference type="HOGENOM" id="CLU_092227_0_2_6"/>
<dbReference type="OrthoDB" id="9808307at2"/>
<dbReference type="Proteomes" id="UP000006904">
    <property type="component" value="Chromosome"/>
</dbReference>
<dbReference type="GO" id="GO:0015934">
    <property type="term" value="C:large ribosomal subunit"/>
    <property type="evidence" value="ECO:0007669"/>
    <property type="project" value="InterPro"/>
</dbReference>
<dbReference type="GO" id="GO:0070180">
    <property type="term" value="F:large ribosomal subunit rRNA binding"/>
    <property type="evidence" value="ECO:0007669"/>
    <property type="project" value="UniProtKB-UniRule"/>
</dbReference>
<dbReference type="GO" id="GO:0003735">
    <property type="term" value="F:structural constituent of ribosome"/>
    <property type="evidence" value="ECO:0007669"/>
    <property type="project" value="InterPro"/>
</dbReference>
<dbReference type="GO" id="GO:0006412">
    <property type="term" value="P:translation"/>
    <property type="evidence" value="ECO:0007669"/>
    <property type="project" value="UniProtKB-UniRule"/>
</dbReference>
<dbReference type="CDD" id="cd05797">
    <property type="entry name" value="Ribosomal_L10"/>
    <property type="match status" value="1"/>
</dbReference>
<dbReference type="Gene3D" id="3.30.70.1730">
    <property type="match status" value="1"/>
</dbReference>
<dbReference type="Gene3D" id="6.10.250.2350">
    <property type="match status" value="1"/>
</dbReference>
<dbReference type="HAMAP" id="MF_00362">
    <property type="entry name" value="Ribosomal_uL10"/>
    <property type="match status" value="1"/>
</dbReference>
<dbReference type="InterPro" id="IPR001790">
    <property type="entry name" value="Ribosomal_uL10"/>
</dbReference>
<dbReference type="InterPro" id="IPR043141">
    <property type="entry name" value="Ribosomal_uL10-like_sf"/>
</dbReference>
<dbReference type="InterPro" id="IPR022973">
    <property type="entry name" value="Ribosomal_uL10_bac"/>
</dbReference>
<dbReference type="InterPro" id="IPR047865">
    <property type="entry name" value="Ribosomal_uL10_bac_type"/>
</dbReference>
<dbReference type="InterPro" id="IPR002363">
    <property type="entry name" value="Ribosomal_uL10_CS_bac"/>
</dbReference>
<dbReference type="NCBIfam" id="NF000955">
    <property type="entry name" value="PRK00099.1-1"/>
    <property type="match status" value="1"/>
</dbReference>
<dbReference type="PANTHER" id="PTHR11560">
    <property type="entry name" value="39S RIBOSOMAL PROTEIN L10, MITOCHONDRIAL"/>
    <property type="match status" value="1"/>
</dbReference>
<dbReference type="Pfam" id="PF00466">
    <property type="entry name" value="Ribosomal_L10"/>
    <property type="match status" value="1"/>
</dbReference>
<dbReference type="SUPFAM" id="SSF160369">
    <property type="entry name" value="Ribosomal protein L10-like"/>
    <property type="match status" value="1"/>
</dbReference>
<dbReference type="PROSITE" id="PS01109">
    <property type="entry name" value="RIBOSOMAL_L10"/>
    <property type="match status" value="1"/>
</dbReference>